<protein>
    <recommendedName>
        <fullName evidence="1">Histidinol dehydrogenase</fullName>
        <shortName evidence="1">HDH</shortName>
        <ecNumber evidence="1">1.1.1.23</ecNumber>
    </recommendedName>
</protein>
<feature type="chain" id="PRO_0000135794" description="Histidinol dehydrogenase">
    <location>
        <begin position="1"/>
        <end position="436"/>
    </location>
</feature>
<feature type="active site" description="Proton acceptor" evidence="1">
    <location>
        <position position="332"/>
    </location>
</feature>
<feature type="active site" description="Proton acceptor" evidence="1">
    <location>
        <position position="333"/>
    </location>
</feature>
<feature type="binding site" evidence="1">
    <location>
        <position position="135"/>
    </location>
    <ligand>
        <name>NAD(+)</name>
        <dbReference type="ChEBI" id="CHEBI:57540"/>
    </ligand>
</feature>
<feature type="binding site" evidence="1">
    <location>
        <position position="196"/>
    </location>
    <ligand>
        <name>NAD(+)</name>
        <dbReference type="ChEBI" id="CHEBI:57540"/>
    </ligand>
</feature>
<feature type="binding site" evidence="1">
    <location>
        <position position="219"/>
    </location>
    <ligand>
        <name>NAD(+)</name>
        <dbReference type="ChEBI" id="CHEBI:57540"/>
    </ligand>
</feature>
<feature type="binding site" evidence="1">
    <location>
        <position position="242"/>
    </location>
    <ligand>
        <name>substrate</name>
    </ligand>
</feature>
<feature type="binding site" evidence="1">
    <location>
        <position position="264"/>
    </location>
    <ligand>
        <name>substrate</name>
    </ligand>
</feature>
<feature type="binding site" evidence="1">
    <location>
        <position position="264"/>
    </location>
    <ligand>
        <name>Zn(2+)</name>
        <dbReference type="ChEBI" id="CHEBI:29105"/>
    </ligand>
</feature>
<feature type="binding site" evidence="1">
    <location>
        <position position="267"/>
    </location>
    <ligand>
        <name>substrate</name>
    </ligand>
</feature>
<feature type="binding site" evidence="1">
    <location>
        <position position="267"/>
    </location>
    <ligand>
        <name>Zn(2+)</name>
        <dbReference type="ChEBI" id="CHEBI:29105"/>
    </ligand>
</feature>
<feature type="binding site" evidence="1">
    <location>
        <position position="333"/>
    </location>
    <ligand>
        <name>substrate</name>
    </ligand>
</feature>
<feature type="binding site" evidence="1">
    <location>
        <position position="366"/>
    </location>
    <ligand>
        <name>substrate</name>
    </ligand>
</feature>
<feature type="binding site" evidence="1">
    <location>
        <position position="366"/>
    </location>
    <ligand>
        <name>Zn(2+)</name>
        <dbReference type="ChEBI" id="CHEBI:29105"/>
    </ligand>
</feature>
<feature type="binding site" evidence="1">
    <location>
        <position position="420"/>
    </location>
    <ligand>
        <name>substrate</name>
    </ligand>
</feature>
<feature type="binding site" evidence="1">
    <location>
        <position position="425"/>
    </location>
    <ligand>
        <name>substrate</name>
    </ligand>
</feature>
<feature type="binding site" evidence="1">
    <location>
        <position position="425"/>
    </location>
    <ligand>
        <name>Zn(2+)</name>
        <dbReference type="ChEBI" id="CHEBI:29105"/>
    </ligand>
</feature>
<feature type="strand" evidence="2">
    <location>
        <begin position="7"/>
        <end position="10"/>
    </location>
</feature>
<feature type="helix" evidence="2">
    <location>
        <begin position="16"/>
        <end position="24"/>
    </location>
</feature>
<feature type="helix" evidence="2">
    <location>
        <begin position="32"/>
        <end position="48"/>
    </location>
</feature>
<feature type="helix" evidence="2">
    <location>
        <begin position="50"/>
        <end position="61"/>
    </location>
</feature>
<feature type="helix" evidence="2">
    <location>
        <begin position="68"/>
        <end position="71"/>
    </location>
</feature>
<feature type="helix" evidence="2">
    <location>
        <begin position="75"/>
        <end position="83"/>
    </location>
</feature>
<feature type="helix" evidence="2">
    <location>
        <begin position="87"/>
        <end position="107"/>
    </location>
</feature>
<feature type="strand" evidence="2">
    <location>
        <begin position="112"/>
        <end position="115"/>
    </location>
</feature>
<feature type="strand" evidence="2">
    <location>
        <begin position="121"/>
        <end position="128"/>
    </location>
</feature>
<feature type="strand" evidence="2">
    <location>
        <begin position="130"/>
        <end position="135"/>
    </location>
</feature>
<feature type="helix" evidence="2">
    <location>
        <begin position="144"/>
        <end position="157"/>
    </location>
</feature>
<feature type="strand" evidence="2">
    <location>
        <begin position="160"/>
        <end position="165"/>
    </location>
</feature>
<feature type="helix" evidence="2">
    <location>
        <begin position="169"/>
        <end position="171"/>
    </location>
</feature>
<feature type="helix" evidence="2">
    <location>
        <begin position="175"/>
        <end position="184"/>
    </location>
</feature>
<feature type="strand" evidence="2">
    <location>
        <begin position="188"/>
        <end position="190"/>
    </location>
</feature>
<feature type="helix" evidence="2">
    <location>
        <begin position="194"/>
        <end position="203"/>
    </location>
</feature>
<feature type="strand" evidence="2">
    <location>
        <begin position="206"/>
        <end position="208"/>
    </location>
</feature>
<feature type="strand" evidence="2">
    <location>
        <begin position="212"/>
        <end position="215"/>
    </location>
</feature>
<feature type="helix" evidence="2">
    <location>
        <begin position="220"/>
        <end position="229"/>
    </location>
</feature>
<feature type="strand" evidence="2">
    <location>
        <begin position="233"/>
        <end position="235"/>
    </location>
</feature>
<feature type="strand" evidence="2">
    <location>
        <begin position="243"/>
        <end position="248"/>
    </location>
</feature>
<feature type="helix" evidence="2">
    <location>
        <begin position="254"/>
        <end position="265"/>
    </location>
</feature>
<feature type="strand" evidence="2">
    <location>
        <begin position="272"/>
        <end position="278"/>
    </location>
</feature>
<feature type="helix" evidence="2">
    <location>
        <begin position="280"/>
        <end position="293"/>
    </location>
</feature>
<feature type="helix" evidence="2">
    <location>
        <begin position="294"/>
        <end position="296"/>
    </location>
</feature>
<feature type="helix" evidence="2">
    <location>
        <begin position="300"/>
        <end position="310"/>
    </location>
</feature>
<feature type="strand" evidence="2">
    <location>
        <begin position="312"/>
        <end position="315"/>
    </location>
</feature>
<feature type="helix" evidence="2">
    <location>
        <begin position="319"/>
        <end position="329"/>
    </location>
</feature>
<feature type="strand" evidence="2">
    <location>
        <begin position="332"/>
        <end position="339"/>
    </location>
</feature>
<feature type="helix" evidence="2">
    <location>
        <begin position="341"/>
        <end position="344"/>
    </location>
</feature>
<feature type="helix" evidence="2">
    <location>
        <begin position="345"/>
        <end position="347"/>
    </location>
</feature>
<feature type="strand" evidence="2">
    <location>
        <begin position="352"/>
        <end position="356"/>
    </location>
</feature>
<feature type="helix" evidence="2">
    <location>
        <begin position="380"/>
        <end position="382"/>
    </location>
</feature>
<feature type="helix" evidence="2">
    <location>
        <begin position="389"/>
        <end position="392"/>
    </location>
</feature>
<feature type="strand" evidence="2">
    <location>
        <begin position="393"/>
        <end position="399"/>
    </location>
</feature>
<accession>Q606Q2</accession>
<sequence>MTEVKIKRLYTGDADFASQLDRLLAWSESEDTDIHQRVTEIIGCIRRDGDAALVELTARFDHFVVDTAAALELPRDVLEAAWQALPAEQAKALREAAERIRAYAERQKLDSWDYREADGTLLGQKITPLDRVGLYVPGGKAAYPSSVLMNAVPAKVAGVPELIMAVPAPRGELNALVLAAAYISGVDRVFRIGGAQAVAALAYGTETVPRVDKIVGPGNIYVATAKKLVFGQVGIDMVAGPSEILVISDGRTDPDWIAMDLFSQAEHDEDAQAILISPDAAHLEAVQASIERLLPGMERAEVIRTSLERRGGMILVDDLEQAAAVANRIAPEHLELSVESPEVLVESIRNAGAIFMGRYTAEALGDYCAGPNHVLPTSGTARFSSPLGVYDFQKRSSLIYCSPDGADQLGRTASLLAWGEGLGAHARSAEYRIRHH</sequence>
<comment type="function">
    <text evidence="1">Catalyzes the sequential NAD-dependent oxidations of L-histidinol to L-histidinaldehyde and then to L-histidine.</text>
</comment>
<comment type="catalytic activity">
    <reaction evidence="1">
        <text>L-histidinol + 2 NAD(+) + H2O = L-histidine + 2 NADH + 3 H(+)</text>
        <dbReference type="Rhea" id="RHEA:20641"/>
        <dbReference type="ChEBI" id="CHEBI:15377"/>
        <dbReference type="ChEBI" id="CHEBI:15378"/>
        <dbReference type="ChEBI" id="CHEBI:57540"/>
        <dbReference type="ChEBI" id="CHEBI:57595"/>
        <dbReference type="ChEBI" id="CHEBI:57699"/>
        <dbReference type="ChEBI" id="CHEBI:57945"/>
        <dbReference type="EC" id="1.1.1.23"/>
    </reaction>
</comment>
<comment type="cofactor">
    <cofactor evidence="1">
        <name>Zn(2+)</name>
        <dbReference type="ChEBI" id="CHEBI:29105"/>
    </cofactor>
    <text evidence="1">Binds 1 zinc ion per subunit.</text>
</comment>
<comment type="pathway">
    <text evidence="1">Amino-acid biosynthesis; L-histidine biosynthesis; L-histidine from 5-phospho-alpha-D-ribose 1-diphosphate: step 9/9.</text>
</comment>
<comment type="similarity">
    <text evidence="1">Belongs to the histidinol dehydrogenase family.</text>
</comment>
<dbReference type="EC" id="1.1.1.23" evidence="1"/>
<dbReference type="EMBL" id="AE017282">
    <property type="protein sequence ID" value="AAU92021.1"/>
    <property type="molecule type" value="Genomic_DNA"/>
</dbReference>
<dbReference type="RefSeq" id="WP_010961209.1">
    <property type="nucleotide sequence ID" value="NC_002977.6"/>
</dbReference>
<dbReference type="PDB" id="4GIC">
    <property type="method" value="X-ray"/>
    <property type="resolution" value="2.05 A"/>
    <property type="chains" value="A/B=2-422"/>
</dbReference>
<dbReference type="PDBsum" id="4GIC"/>
<dbReference type="SMR" id="Q606Q2"/>
<dbReference type="STRING" id="243233.MCA1963"/>
<dbReference type="GeneID" id="88224195"/>
<dbReference type="KEGG" id="mca:MCA1963"/>
<dbReference type="eggNOG" id="COG0141">
    <property type="taxonomic scope" value="Bacteria"/>
</dbReference>
<dbReference type="HOGENOM" id="CLU_006732_3_3_6"/>
<dbReference type="UniPathway" id="UPA00031">
    <property type="reaction ID" value="UER00014"/>
</dbReference>
<dbReference type="EvolutionaryTrace" id="Q606Q2"/>
<dbReference type="Proteomes" id="UP000006821">
    <property type="component" value="Chromosome"/>
</dbReference>
<dbReference type="GO" id="GO:0005829">
    <property type="term" value="C:cytosol"/>
    <property type="evidence" value="ECO:0007669"/>
    <property type="project" value="TreeGrafter"/>
</dbReference>
<dbReference type="GO" id="GO:0004399">
    <property type="term" value="F:histidinol dehydrogenase activity"/>
    <property type="evidence" value="ECO:0007669"/>
    <property type="project" value="UniProtKB-UniRule"/>
</dbReference>
<dbReference type="GO" id="GO:0051287">
    <property type="term" value="F:NAD binding"/>
    <property type="evidence" value="ECO:0007669"/>
    <property type="project" value="InterPro"/>
</dbReference>
<dbReference type="GO" id="GO:0008270">
    <property type="term" value="F:zinc ion binding"/>
    <property type="evidence" value="ECO:0007669"/>
    <property type="project" value="UniProtKB-UniRule"/>
</dbReference>
<dbReference type="GO" id="GO:0000105">
    <property type="term" value="P:L-histidine biosynthetic process"/>
    <property type="evidence" value="ECO:0007669"/>
    <property type="project" value="UniProtKB-UniRule"/>
</dbReference>
<dbReference type="CDD" id="cd06572">
    <property type="entry name" value="Histidinol_dh"/>
    <property type="match status" value="1"/>
</dbReference>
<dbReference type="FunFam" id="3.40.50.1980:FF:000004">
    <property type="entry name" value="Histidinol dehydrogenase"/>
    <property type="match status" value="1"/>
</dbReference>
<dbReference type="FunFam" id="3.40.50.1980:FF:000010">
    <property type="entry name" value="Histidinol dehydrogenase"/>
    <property type="match status" value="1"/>
</dbReference>
<dbReference type="Gene3D" id="1.20.5.1300">
    <property type="match status" value="1"/>
</dbReference>
<dbReference type="Gene3D" id="3.40.50.1980">
    <property type="entry name" value="Nitrogenase molybdenum iron protein domain"/>
    <property type="match status" value="2"/>
</dbReference>
<dbReference type="HAMAP" id="MF_01024">
    <property type="entry name" value="HisD"/>
    <property type="match status" value="1"/>
</dbReference>
<dbReference type="InterPro" id="IPR016161">
    <property type="entry name" value="Ald_DH/histidinol_DH"/>
</dbReference>
<dbReference type="InterPro" id="IPR001692">
    <property type="entry name" value="Histidinol_DH_CS"/>
</dbReference>
<dbReference type="InterPro" id="IPR022695">
    <property type="entry name" value="Histidinol_DH_monofunct"/>
</dbReference>
<dbReference type="InterPro" id="IPR012131">
    <property type="entry name" value="Hstdl_DH"/>
</dbReference>
<dbReference type="NCBIfam" id="TIGR00069">
    <property type="entry name" value="hisD"/>
    <property type="match status" value="1"/>
</dbReference>
<dbReference type="PANTHER" id="PTHR21256:SF2">
    <property type="entry name" value="HISTIDINE BIOSYNTHESIS TRIFUNCTIONAL PROTEIN"/>
    <property type="match status" value="1"/>
</dbReference>
<dbReference type="PANTHER" id="PTHR21256">
    <property type="entry name" value="HISTIDINOL DEHYDROGENASE HDH"/>
    <property type="match status" value="1"/>
</dbReference>
<dbReference type="Pfam" id="PF00815">
    <property type="entry name" value="Histidinol_dh"/>
    <property type="match status" value="1"/>
</dbReference>
<dbReference type="PIRSF" id="PIRSF000099">
    <property type="entry name" value="Histidinol_dh"/>
    <property type="match status" value="1"/>
</dbReference>
<dbReference type="PRINTS" id="PR00083">
    <property type="entry name" value="HOLDHDRGNASE"/>
</dbReference>
<dbReference type="SUPFAM" id="SSF53720">
    <property type="entry name" value="ALDH-like"/>
    <property type="match status" value="1"/>
</dbReference>
<dbReference type="PROSITE" id="PS00611">
    <property type="entry name" value="HISOL_DEHYDROGENASE"/>
    <property type="match status" value="1"/>
</dbReference>
<keyword id="KW-0002">3D-structure</keyword>
<keyword id="KW-0028">Amino-acid biosynthesis</keyword>
<keyword id="KW-0368">Histidine biosynthesis</keyword>
<keyword id="KW-0479">Metal-binding</keyword>
<keyword id="KW-0520">NAD</keyword>
<keyword id="KW-0560">Oxidoreductase</keyword>
<keyword id="KW-1185">Reference proteome</keyword>
<keyword id="KW-0862">Zinc</keyword>
<gene>
    <name evidence="1" type="primary">hisD</name>
    <name type="ordered locus">MCA1963</name>
</gene>
<organism>
    <name type="scientific">Methylococcus capsulatus (strain ATCC 33009 / NCIMB 11132 / Bath)</name>
    <dbReference type="NCBI Taxonomy" id="243233"/>
    <lineage>
        <taxon>Bacteria</taxon>
        <taxon>Pseudomonadati</taxon>
        <taxon>Pseudomonadota</taxon>
        <taxon>Gammaproteobacteria</taxon>
        <taxon>Methylococcales</taxon>
        <taxon>Methylococcaceae</taxon>
        <taxon>Methylococcus</taxon>
    </lineage>
</organism>
<proteinExistence type="evidence at protein level"/>
<reference key="1">
    <citation type="journal article" date="2004" name="PLoS Biol.">
        <title>Genomic insights into methanotrophy: the complete genome sequence of Methylococcus capsulatus (Bath).</title>
        <authorList>
            <person name="Ward N.L."/>
            <person name="Larsen O."/>
            <person name="Sakwa J."/>
            <person name="Bruseth L."/>
            <person name="Khouri H.M."/>
            <person name="Durkin A.S."/>
            <person name="Dimitrov G."/>
            <person name="Jiang L."/>
            <person name="Scanlan D."/>
            <person name="Kang K.H."/>
            <person name="Lewis M.R."/>
            <person name="Nelson K.E."/>
            <person name="Methe B.A."/>
            <person name="Wu M."/>
            <person name="Heidelberg J.F."/>
            <person name="Paulsen I.T."/>
            <person name="Fouts D.E."/>
            <person name="Ravel J."/>
            <person name="Tettelin H."/>
            <person name="Ren Q."/>
            <person name="Read T.D."/>
            <person name="DeBoy R.T."/>
            <person name="Seshadri R."/>
            <person name="Salzberg S.L."/>
            <person name="Jensen H.B."/>
            <person name="Birkeland N.K."/>
            <person name="Nelson W.C."/>
            <person name="Dodson R.J."/>
            <person name="Grindhaug S.H."/>
            <person name="Holt I.E."/>
            <person name="Eidhammer I."/>
            <person name="Jonasen I."/>
            <person name="Vanaken S."/>
            <person name="Utterback T.R."/>
            <person name="Feldblyum T.V."/>
            <person name="Fraser C.M."/>
            <person name="Lillehaug J.R."/>
            <person name="Eisen J.A."/>
        </authorList>
    </citation>
    <scope>NUCLEOTIDE SEQUENCE [LARGE SCALE GENOMIC DNA]</scope>
    <source>
        <strain>ATCC 33009 / NCIMB 11132 / Bath</strain>
    </source>
</reference>
<name>HISX_METCA</name>
<evidence type="ECO:0000255" key="1">
    <source>
        <dbReference type="HAMAP-Rule" id="MF_01024"/>
    </source>
</evidence>
<evidence type="ECO:0007829" key="2">
    <source>
        <dbReference type="PDB" id="4GIC"/>
    </source>
</evidence>